<accession>Q72E00</accession>
<organism>
    <name type="scientific">Nitratidesulfovibrio vulgaris (strain ATCC 29579 / DSM 644 / CCUG 34227 / NCIMB 8303 / VKM B-1760 / Hildenborough)</name>
    <name type="common">Desulfovibrio vulgaris</name>
    <dbReference type="NCBI Taxonomy" id="882"/>
    <lineage>
        <taxon>Bacteria</taxon>
        <taxon>Pseudomonadati</taxon>
        <taxon>Thermodesulfobacteriota</taxon>
        <taxon>Desulfovibrionia</taxon>
        <taxon>Desulfovibrionales</taxon>
        <taxon>Desulfovibrionaceae</taxon>
        <taxon>Nitratidesulfovibrio</taxon>
    </lineage>
</organism>
<feature type="chain" id="PRO_0000368462" description="ATP synthase subunit b">
    <location>
        <begin position="1"/>
        <end position="176"/>
    </location>
</feature>
<feature type="transmembrane region" description="Helical" evidence="1">
    <location>
        <begin position="24"/>
        <end position="43"/>
    </location>
</feature>
<reference key="1">
    <citation type="journal article" date="2004" name="Nat. Biotechnol.">
        <title>The genome sequence of the anaerobic, sulfate-reducing bacterium Desulfovibrio vulgaris Hildenborough.</title>
        <authorList>
            <person name="Heidelberg J.F."/>
            <person name="Seshadri R."/>
            <person name="Haveman S.A."/>
            <person name="Hemme C.L."/>
            <person name="Paulsen I.T."/>
            <person name="Kolonay J.F."/>
            <person name="Eisen J.A."/>
            <person name="Ward N.L."/>
            <person name="Methe B.A."/>
            <person name="Brinkac L.M."/>
            <person name="Daugherty S.C."/>
            <person name="DeBoy R.T."/>
            <person name="Dodson R.J."/>
            <person name="Durkin A.S."/>
            <person name="Madupu R."/>
            <person name="Nelson W.C."/>
            <person name="Sullivan S.A."/>
            <person name="Fouts D.E."/>
            <person name="Haft D.H."/>
            <person name="Selengut J."/>
            <person name="Peterson J.D."/>
            <person name="Davidsen T.M."/>
            <person name="Zafar N."/>
            <person name="Zhou L."/>
            <person name="Radune D."/>
            <person name="Dimitrov G."/>
            <person name="Hance M."/>
            <person name="Tran K."/>
            <person name="Khouri H.M."/>
            <person name="Gill J."/>
            <person name="Utterback T.R."/>
            <person name="Feldblyum T.V."/>
            <person name="Wall J.D."/>
            <person name="Voordouw G."/>
            <person name="Fraser C.M."/>
        </authorList>
    </citation>
    <scope>NUCLEOTIDE SEQUENCE [LARGE SCALE GENOMIC DNA]</scope>
    <source>
        <strain>ATCC 29579 / DSM 644 / CCUG 34227 / NCIMB 8303 / VKM B-1760 / Hildenborough</strain>
    </source>
</reference>
<evidence type="ECO:0000255" key="1">
    <source>
        <dbReference type="HAMAP-Rule" id="MF_01398"/>
    </source>
</evidence>
<name>ATPF_NITV2</name>
<proteinExistence type="inferred from homology"/>
<keyword id="KW-0066">ATP synthesis</keyword>
<keyword id="KW-0997">Cell inner membrane</keyword>
<keyword id="KW-1003">Cell membrane</keyword>
<keyword id="KW-0138">CF(0)</keyword>
<keyword id="KW-0375">Hydrogen ion transport</keyword>
<keyword id="KW-0406">Ion transport</keyword>
<keyword id="KW-0472">Membrane</keyword>
<keyword id="KW-1185">Reference proteome</keyword>
<keyword id="KW-0812">Transmembrane</keyword>
<keyword id="KW-1133">Transmembrane helix</keyword>
<keyword id="KW-0813">Transport</keyword>
<protein>
    <recommendedName>
        <fullName evidence="1">ATP synthase subunit b</fullName>
    </recommendedName>
    <alternativeName>
        <fullName evidence="1">ATP synthase F(0) sector subunit b</fullName>
    </alternativeName>
    <alternativeName>
        <fullName evidence="1">ATPase subunit I</fullName>
    </alternativeName>
    <alternativeName>
        <fullName evidence="1">F-type ATPase subunit b</fullName>
        <shortName evidence="1">F-ATPase subunit b</shortName>
    </alternativeName>
</protein>
<dbReference type="EMBL" id="AE017285">
    <property type="protein sequence ID" value="AAS95259.1"/>
    <property type="molecule type" value="Genomic_DNA"/>
</dbReference>
<dbReference type="RefSeq" id="YP_010000.1">
    <property type="nucleotide sequence ID" value="NC_002937.3"/>
</dbReference>
<dbReference type="SMR" id="Q72E00"/>
<dbReference type="IntAct" id="Q72E00">
    <property type="interactions" value="1"/>
</dbReference>
<dbReference type="STRING" id="882.DVU_0779"/>
<dbReference type="PaxDb" id="882-DVU_0779"/>
<dbReference type="EnsemblBacteria" id="AAS95259">
    <property type="protein sequence ID" value="AAS95259"/>
    <property type="gene ID" value="DVU_0779"/>
</dbReference>
<dbReference type="KEGG" id="dvu:DVU_0779"/>
<dbReference type="PATRIC" id="fig|882.5.peg.734"/>
<dbReference type="eggNOG" id="COG0711">
    <property type="taxonomic scope" value="Bacteria"/>
</dbReference>
<dbReference type="HOGENOM" id="CLU_079215_3_1_7"/>
<dbReference type="OrthoDB" id="5471016at2"/>
<dbReference type="PhylomeDB" id="Q72E00"/>
<dbReference type="Proteomes" id="UP000002194">
    <property type="component" value="Chromosome"/>
</dbReference>
<dbReference type="GO" id="GO:0005886">
    <property type="term" value="C:plasma membrane"/>
    <property type="evidence" value="ECO:0007669"/>
    <property type="project" value="UniProtKB-SubCell"/>
</dbReference>
<dbReference type="GO" id="GO:0045259">
    <property type="term" value="C:proton-transporting ATP synthase complex"/>
    <property type="evidence" value="ECO:0007669"/>
    <property type="project" value="UniProtKB-KW"/>
</dbReference>
<dbReference type="GO" id="GO:0046933">
    <property type="term" value="F:proton-transporting ATP synthase activity, rotational mechanism"/>
    <property type="evidence" value="ECO:0007669"/>
    <property type="project" value="UniProtKB-UniRule"/>
</dbReference>
<dbReference type="GO" id="GO:0046961">
    <property type="term" value="F:proton-transporting ATPase activity, rotational mechanism"/>
    <property type="evidence" value="ECO:0007669"/>
    <property type="project" value="TreeGrafter"/>
</dbReference>
<dbReference type="CDD" id="cd06503">
    <property type="entry name" value="ATP-synt_Fo_b"/>
    <property type="match status" value="1"/>
</dbReference>
<dbReference type="HAMAP" id="MF_01398">
    <property type="entry name" value="ATP_synth_b_bprime"/>
    <property type="match status" value="1"/>
</dbReference>
<dbReference type="InterPro" id="IPR002146">
    <property type="entry name" value="ATP_synth_b/b'su_bac/chlpt"/>
</dbReference>
<dbReference type="InterPro" id="IPR050059">
    <property type="entry name" value="ATP_synthase_B_chain"/>
</dbReference>
<dbReference type="PANTHER" id="PTHR33445:SF1">
    <property type="entry name" value="ATP SYNTHASE SUBUNIT B"/>
    <property type="match status" value="1"/>
</dbReference>
<dbReference type="PANTHER" id="PTHR33445">
    <property type="entry name" value="ATP SYNTHASE SUBUNIT B', CHLOROPLASTIC"/>
    <property type="match status" value="1"/>
</dbReference>
<dbReference type="Pfam" id="PF00430">
    <property type="entry name" value="ATP-synt_B"/>
    <property type="match status" value="1"/>
</dbReference>
<comment type="function">
    <text evidence="1">F(1)F(0) ATP synthase produces ATP from ADP in the presence of a proton or sodium gradient. F-type ATPases consist of two structural domains, F(1) containing the extramembraneous catalytic core and F(0) containing the membrane proton channel, linked together by a central stalk and a peripheral stalk. During catalysis, ATP synthesis in the catalytic domain of F(1) is coupled via a rotary mechanism of the central stalk subunits to proton translocation.</text>
</comment>
<comment type="function">
    <text evidence="1">Component of the F(0) channel, it forms part of the peripheral stalk, linking F(1) to F(0).</text>
</comment>
<comment type="subunit">
    <text evidence="1">F-type ATPases have 2 components, F(1) - the catalytic core - and F(0) - the membrane proton channel. F(1) has five subunits: alpha(3), beta(3), gamma(1), delta(1), epsilon(1). F(0) has three main subunits: a(1), b(2) and c(10-14). The alpha and beta chains form an alternating ring which encloses part of the gamma chain. F(1) is attached to F(0) by a central stalk formed by the gamma and epsilon chains, while a peripheral stalk is formed by the delta and b chains.</text>
</comment>
<comment type="subcellular location">
    <subcellularLocation>
        <location evidence="1">Cell inner membrane</location>
        <topology evidence="1">Single-pass membrane protein</topology>
    </subcellularLocation>
</comment>
<comment type="similarity">
    <text evidence="1">Belongs to the ATPase B chain family.</text>
</comment>
<gene>
    <name evidence="1" type="primary">atpF</name>
    <name type="ordered locus">DVU_0779</name>
</gene>
<sequence length="176" mass="19573">MTLFFASMAYASGDSGHGPDWGNFAFRVVNFVIFAGIIWKAAGKKIVGFFTGRRQGIEQELNDLETRKTEAKKQLAEVERRIANLESERQAILADYRAQGENIKAAIIDKAEKSASLITEQAKRTADNEIKAAIDAMRAQMADEIIVAAEKLLAEKLTANEHEKLIDKYLTKVVLN</sequence>